<feature type="chain" id="PRO_0000386527" description="Vacuolar protein-sorting-associated protein 25">
    <location>
        <begin position="1"/>
        <end position="174"/>
    </location>
</feature>
<evidence type="ECO:0000250" key="1"/>
<evidence type="ECO:0000269" key="2">
    <source>
    </source>
</evidence>
<evidence type="ECO:0000269" key="3">
    <source>
    </source>
</evidence>
<evidence type="ECO:0000269" key="4">
    <source>
    </source>
</evidence>
<evidence type="ECO:0000269" key="5">
    <source>
    </source>
</evidence>
<evidence type="ECO:0000269" key="6">
    <source>
    </source>
</evidence>
<evidence type="ECO:0000269" key="7">
    <source>
    </source>
</evidence>
<evidence type="ECO:0000269" key="8">
    <source>
    </source>
</evidence>
<evidence type="ECO:0000305" key="9"/>
<accession>Q7JXV9</accession>
<comment type="function">
    <text evidence="1 2 3 6 7 8">Component of the ESCRT-II complex (endosomal sorting complex required for transport II), which is required for multivesicular body (MVB) formation and sorting of endosomal cargo proteins into MVBs. The MVB pathway mediates delivery of transmembrane proteins into the lumen of the lysosome for degradation. The ESCRT-II complex is probably involved in the recruitment of the ESCRT-III complex (By similarity). Seems to function as a tumor suppressor by regulating Notch trafficking, hence preventing non-autonomous overproliferation. May be involved in the regulation of autophagy. ESCRT-II interacts with bicoid mRNA, which is required for the anterior localization of bicoid mRNA in the developing egg.</text>
</comment>
<comment type="subunit">
    <text evidence="1 9">Component of the endosomal sorting complex required for transport II (ESCRT-II) (By similarity). Interacts with Lsn/Snf8/Vps22 (Probable).</text>
</comment>
<comment type="interaction">
    <interactant intactId="EBI-98834">
        <id>Q7JXV9</id>
    </interactant>
    <interactant intactId="EBI-104459">
        <id>Q9VD72</id>
        <label>lsn</label>
    </interactant>
    <organismsDiffer>false</organismsDiffer>
    <experiments>3</experiments>
</comment>
<comment type="subcellular location">
    <subcellularLocation>
        <location evidence="1">Cytoplasm</location>
    </subcellularLocation>
    <subcellularLocation>
        <location evidence="1">Endosome membrane</location>
    </subcellularLocation>
</comment>
<comment type="disruption phenotype">
    <text evidence="2 3 4 5 6 7 8">Vps25 mutant cells exhibit multivesicular body sorting defects, with large amounts of ubiquitinated proteins detected on endosomes. This leads to activation of signals (through Notch and Dpp receptors) that drive cell proliferation, non-autonomous overgrowth, loss of epithelial organization, and render cells sensitive to apoptosis. Vps25 mutant cells display accumulation of autophagosomes. Bicoid mRNA is mislocalized in developing eggs.</text>
</comment>
<comment type="similarity">
    <text evidence="9">Belongs to the VPS25 family.</text>
</comment>
<reference key="1">
    <citation type="journal article" date="2000" name="Science">
        <title>The genome sequence of Drosophila melanogaster.</title>
        <authorList>
            <person name="Adams M.D."/>
            <person name="Celniker S.E."/>
            <person name="Holt R.A."/>
            <person name="Evans C.A."/>
            <person name="Gocayne J.D."/>
            <person name="Amanatides P.G."/>
            <person name="Scherer S.E."/>
            <person name="Li P.W."/>
            <person name="Hoskins R.A."/>
            <person name="Galle R.F."/>
            <person name="George R.A."/>
            <person name="Lewis S.E."/>
            <person name="Richards S."/>
            <person name="Ashburner M."/>
            <person name="Henderson S.N."/>
            <person name="Sutton G.G."/>
            <person name="Wortman J.R."/>
            <person name="Yandell M.D."/>
            <person name="Zhang Q."/>
            <person name="Chen L.X."/>
            <person name="Brandon R.C."/>
            <person name="Rogers Y.-H.C."/>
            <person name="Blazej R.G."/>
            <person name="Champe M."/>
            <person name="Pfeiffer B.D."/>
            <person name="Wan K.H."/>
            <person name="Doyle C."/>
            <person name="Baxter E.G."/>
            <person name="Helt G."/>
            <person name="Nelson C.R."/>
            <person name="Miklos G.L.G."/>
            <person name="Abril J.F."/>
            <person name="Agbayani A."/>
            <person name="An H.-J."/>
            <person name="Andrews-Pfannkoch C."/>
            <person name="Baldwin D."/>
            <person name="Ballew R.M."/>
            <person name="Basu A."/>
            <person name="Baxendale J."/>
            <person name="Bayraktaroglu L."/>
            <person name="Beasley E.M."/>
            <person name="Beeson K.Y."/>
            <person name="Benos P.V."/>
            <person name="Berman B.P."/>
            <person name="Bhandari D."/>
            <person name="Bolshakov S."/>
            <person name="Borkova D."/>
            <person name="Botchan M.R."/>
            <person name="Bouck J."/>
            <person name="Brokstein P."/>
            <person name="Brottier P."/>
            <person name="Burtis K.C."/>
            <person name="Busam D.A."/>
            <person name="Butler H."/>
            <person name="Cadieu E."/>
            <person name="Center A."/>
            <person name="Chandra I."/>
            <person name="Cherry J.M."/>
            <person name="Cawley S."/>
            <person name="Dahlke C."/>
            <person name="Davenport L.B."/>
            <person name="Davies P."/>
            <person name="de Pablos B."/>
            <person name="Delcher A."/>
            <person name="Deng Z."/>
            <person name="Mays A.D."/>
            <person name="Dew I."/>
            <person name="Dietz S.M."/>
            <person name="Dodson K."/>
            <person name="Doup L.E."/>
            <person name="Downes M."/>
            <person name="Dugan-Rocha S."/>
            <person name="Dunkov B.C."/>
            <person name="Dunn P."/>
            <person name="Durbin K.J."/>
            <person name="Evangelista C.C."/>
            <person name="Ferraz C."/>
            <person name="Ferriera S."/>
            <person name="Fleischmann W."/>
            <person name="Fosler C."/>
            <person name="Gabrielian A.E."/>
            <person name="Garg N.S."/>
            <person name="Gelbart W.M."/>
            <person name="Glasser K."/>
            <person name="Glodek A."/>
            <person name="Gong F."/>
            <person name="Gorrell J.H."/>
            <person name="Gu Z."/>
            <person name="Guan P."/>
            <person name="Harris M."/>
            <person name="Harris N.L."/>
            <person name="Harvey D.A."/>
            <person name="Heiman T.J."/>
            <person name="Hernandez J.R."/>
            <person name="Houck J."/>
            <person name="Hostin D."/>
            <person name="Houston K.A."/>
            <person name="Howland T.J."/>
            <person name="Wei M.-H."/>
            <person name="Ibegwam C."/>
            <person name="Jalali M."/>
            <person name="Kalush F."/>
            <person name="Karpen G.H."/>
            <person name="Ke Z."/>
            <person name="Kennison J.A."/>
            <person name="Ketchum K.A."/>
            <person name="Kimmel B.E."/>
            <person name="Kodira C.D."/>
            <person name="Kraft C.L."/>
            <person name="Kravitz S."/>
            <person name="Kulp D."/>
            <person name="Lai Z."/>
            <person name="Lasko P."/>
            <person name="Lei Y."/>
            <person name="Levitsky A.A."/>
            <person name="Li J.H."/>
            <person name="Li Z."/>
            <person name="Liang Y."/>
            <person name="Lin X."/>
            <person name="Liu X."/>
            <person name="Mattei B."/>
            <person name="McIntosh T.C."/>
            <person name="McLeod M.P."/>
            <person name="McPherson D."/>
            <person name="Merkulov G."/>
            <person name="Milshina N.V."/>
            <person name="Mobarry C."/>
            <person name="Morris J."/>
            <person name="Moshrefi A."/>
            <person name="Mount S.M."/>
            <person name="Moy M."/>
            <person name="Murphy B."/>
            <person name="Murphy L."/>
            <person name="Muzny D.M."/>
            <person name="Nelson D.L."/>
            <person name="Nelson D.R."/>
            <person name="Nelson K.A."/>
            <person name="Nixon K."/>
            <person name="Nusskern D.R."/>
            <person name="Pacleb J.M."/>
            <person name="Palazzolo M."/>
            <person name="Pittman G.S."/>
            <person name="Pan S."/>
            <person name="Pollard J."/>
            <person name="Puri V."/>
            <person name="Reese M.G."/>
            <person name="Reinert K."/>
            <person name="Remington K."/>
            <person name="Saunders R.D.C."/>
            <person name="Scheeler F."/>
            <person name="Shen H."/>
            <person name="Shue B.C."/>
            <person name="Siden-Kiamos I."/>
            <person name="Simpson M."/>
            <person name="Skupski M.P."/>
            <person name="Smith T.J."/>
            <person name="Spier E."/>
            <person name="Spradling A.C."/>
            <person name="Stapleton M."/>
            <person name="Strong R."/>
            <person name="Sun E."/>
            <person name="Svirskas R."/>
            <person name="Tector C."/>
            <person name="Turner R."/>
            <person name="Venter E."/>
            <person name="Wang A.H."/>
            <person name="Wang X."/>
            <person name="Wang Z.-Y."/>
            <person name="Wassarman D.A."/>
            <person name="Weinstock G.M."/>
            <person name="Weissenbach J."/>
            <person name="Williams S.M."/>
            <person name="Woodage T."/>
            <person name="Worley K.C."/>
            <person name="Wu D."/>
            <person name="Yang S."/>
            <person name="Yao Q.A."/>
            <person name="Ye J."/>
            <person name="Yeh R.-F."/>
            <person name="Zaveri J.S."/>
            <person name="Zhan M."/>
            <person name="Zhang G."/>
            <person name="Zhao Q."/>
            <person name="Zheng L."/>
            <person name="Zheng X.H."/>
            <person name="Zhong F.N."/>
            <person name="Zhong W."/>
            <person name="Zhou X."/>
            <person name="Zhu S.C."/>
            <person name="Zhu X."/>
            <person name="Smith H.O."/>
            <person name="Gibbs R.A."/>
            <person name="Myers E.W."/>
            <person name="Rubin G.M."/>
            <person name="Venter J.C."/>
        </authorList>
    </citation>
    <scope>NUCLEOTIDE SEQUENCE [LARGE SCALE GENOMIC DNA]</scope>
    <source>
        <strain>Berkeley</strain>
    </source>
</reference>
<reference key="2">
    <citation type="journal article" date="2002" name="Genome Biol.">
        <title>Annotation of the Drosophila melanogaster euchromatic genome: a systematic review.</title>
        <authorList>
            <person name="Misra S."/>
            <person name="Crosby M.A."/>
            <person name="Mungall C.J."/>
            <person name="Matthews B.B."/>
            <person name="Campbell K.S."/>
            <person name="Hradecky P."/>
            <person name="Huang Y."/>
            <person name="Kaminker J.S."/>
            <person name="Millburn G.H."/>
            <person name="Prochnik S.E."/>
            <person name="Smith C.D."/>
            <person name="Tupy J.L."/>
            <person name="Whitfield E.J."/>
            <person name="Bayraktaroglu L."/>
            <person name="Berman B.P."/>
            <person name="Bettencourt B.R."/>
            <person name="Celniker S.E."/>
            <person name="de Grey A.D.N.J."/>
            <person name="Drysdale R.A."/>
            <person name="Harris N.L."/>
            <person name="Richter J."/>
            <person name="Russo S."/>
            <person name="Schroeder A.J."/>
            <person name="Shu S.Q."/>
            <person name="Stapleton M."/>
            <person name="Yamada C."/>
            <person name="Ashburner M."/>
            <person name="Gelbart W.M."/>
            <person name="Rubin G.M."/>
            <person name="Lewis S.E."/>
        </authorList>
    </citation>
    <scope>GENOME REANNOTATION</scope>
    <source>
        <strain>Berkeley</strain>
    </source>
</reference>
<reference key="3">
    <citation type="journal article" date="2002" name="Genome Biol.">
        <title>A Drosophila full-length cDNA resource.</title>
        <authorList>
            <person name="Stapleton M."/>
            <person name="Carlson J.W."/>
            <person name="Brokstein P."/>
            <person name="Yu C."/>
            <person name="Champe M."/>
            <person name="George R.A."/>
            <person name="Guarin H."/>
            <person name="Kronmiller B."/>
            <person name="Pacleb J.M."/>
            <person name="Park S."/>
            <person name="Wan K.H."/>
            <person name="Rubin G.M."/>
            <person name="Celniker S.E."/>
        </authorList>
    </citation>
    <scope>NUCLEOTIDE SEQUENCE [LARGE SCALE MRNA]</scope>
    <source>
        <strain>Berkeley</strain>
        <tissue>Head</tissue>
    </source>
</reference>
<reference key="4">
    <citation type="journal article" date="2003" name="Science">
        <title>A protein interaction map of Drosophila melanogaster.</title>
        <authorList>
            <person name="Giot L."/>
            <person name="Bader J.S."/>
            <person name="Brouwer C."/>
            <person name="Chaudhuri A."/>
            <person name="Kuang B."/>
            <person name="Li Y."/>
            <person name="Hao Y.L."/>
            <person name="Ooi C.E."/>
            <person name="Godwin B."/>
            <person name="Vitols E."/>
            <person name="Vijayadamodar G."/>
            <person name="Pochart P."/>
            <person name="Machineni H."/>
            <person name="Welsh M."/>
            <person name="Kong Y."/>
            <person name="Zerhusen B."/>
            <person name="Malcolm R."/>
            <person name="Varrone Z."/>
            <person name="Collis A."/>
            <person name="Minto M."/>
            <person name="Burgess S."/>
            <person name="McDaniel L."/>
            <person name="Stimpson E."/>
            <person name="Spriggs F."/>
            <person name="Williams J."/>
            <person name="Neurath K."/>
            <person name="Ioime N."/>
            <person name="Agee M."/>
            <person name="Voss E."/>
            <person name="Furtak K."/>
            <person name="Renzulli R."/>
            <person name="Aanensen N."/>
            <person name="Carrolla S."/>
            <person name="Bickelhaupt E."/>
            <person name="Lazovatsky Y."/>
            <person name="DaSilva A."/>
            <person name="Zhong J."/>
            <person name="Stanyon C.A."/>
            <person name="Finley R.L. Jr."/>
            <person name="White K.P."/>
            <person name="Braverman M."/>
            <person name="Jarvie T."/>
            <person name="Gold S."/>
            <person name="Leach M."/>
            <person name="Knight J."/>
            <person name="Shimkets R.A."/>
            <person name="McKenna M.P."/>
            <person name="Chant J."/>
            <person name="Rothberg J.M."/>
        </authorList>
    </citation>
    <scope>INTERACTION WITH LSN/SNF8/VPS22</scope>
</reference>
<reference key="5">
    <citation type="journal article" date="2005" name="Dev. Cell">
        <title>The Drosophila tumor suppressor vps25 prevents nonautonomous overproliferation by regulating notch trafficking.</title>
        <authorList>
            <person name="Vaccari T."/>
            <person name="Bilder D."/>
        </authorList>
    </citation>
    <scope>FUNCTION</scope>
    <scope>DISRUPTION PHENOTYPE</scope>
</reference>
<reference key="6">
    <citation type="journal article" date="2005" name="Dev. Cell">
        <title>Tumor suppressor properties of the ESCRT-II complex component Vps25 in Drosophila.</title>
        <authorList>
            <person name="Thompson B.J."/>
            <person name="Mathieu J."/>
            <person name="Sung H.H."/>
            <person name="Loeser E."/>
            <person name="Rorth P."/>
            <person name="Cohen S.M."/>
        </authorList>
    </citation>
    <scope>FUNCTION</scope>
    <scope>DISRUPTION PHENOTYPE</scope>
</reference>
<reference key="7">
    <citation type="journal article" date="2006" name="Curr. Biol.">
        <title>Lethal giant discs, a novel C2-domain protein, restricts notch activation during endocytosis.</title>
        <authorList>
            <person name="Childress J.L."/>
            <person name="Acar M."/>
            <person name="Tao C."/>
            <person name="Halder G."/>
        </authorList>
    </citation>
    <scope>DISRUPTION PHENOTYPE</scope>
</reference>
<reference key="8">
    <citation type="journal article" date="2006" name="Development">
        <title>vps25 mosaics display non-autonomous cell survival and overgrowth, and autonomous apoptosis.</title>
        <authorList>
            <person name="Herz H.M."/>
            <person name="Chen Z."/>
            <person name="Scherr H."/>
            <person name="Lackey M."/>
            <person name="Bolduc C."/>
            <person name="Bergmann A."/>
        </authorList>
    </citation>
    <scope>DISRUPTION PHENOTYPE</scope>
</reference>
<reference key="9">
    <citation type="journal article" date="2007" name="Curr. Biol.">
        <title>ESCRTs and Fab1 regulate distinct steps of autophagy.</title>
        <authorList>
            <person name="Rusten T.E."/>
            <person name="Vaccari T."/>
            <person name="Lindmo K."/>
            <person name="Rodahl L.M."/>
            <person name="Nezis I.P."/>
            <person name="Sem-Jacobsen C."/>
            <person name="Wendler F."/>
            <person name="Vincent J.P."/>
            <person name="Brech A."/>
            <person name="Bilder D."/>
            <person name="Stenmark H."/>
        </authorList>
    </citation>
    <scope>FUNCTION</scope>
    <scope>DISRUPTION PHENOTYPE</scope>
</reference>
<reference key="10">
    <citation type="journal article" date="2007" name="Nature">
        <title>bicoid RNA localization requires specific binding of an endosomal sorting complex.</title>
        <authorList>
            <person name="Irion U."/>
            <person name="St Johnston D."/>
        </authorList>
    </citation>
    <scope>FUNCTION</scope>
    <scope>DISRUPTION PHENOTYPE</scope>
</reference>
<reference key="11">
    <citation type="journal article" date="2009" name="PLoS ONE">
        <title>Common and distinct genetic properties of ESCRT-II components in Drosophila.</title>
        <authorList>
            <person name="Herz H.M."/>
            <person name="Woodfield S.E."/>
            <person name="Chen Z."/>
            <person name="Bolduc C."/>
            <person name="Bergmann A."/>
        </authorList>
    </citation>
    <scope>FUNCTION</scope>
    <scope>DISRUPTION PHENOTYPE</scope>
</reference>
<dbReference type="EMBL" id="AE013599">
    <property type="protein sequence ID" value="AAF59066.1"/>
    <property type="molecule type" value="Genomic_DNA"/>
</dbReference>
<dbReference type="EMBL" id="AY089657">
    <property type="protein sequence ID" value="AAL90395.1"/>
    <property type="molecule type" value="mRNA"/>
</dbReference>
<dbReference type="RefSeq" id="NP_610398.1">
    <property type="nucleotide sequence ID" value="NM_136554.3"/>
</dbReference>
<dbReference type="SMR" id="Q7JXV9"/>
<dbReference type="BioGRID" id="61697">
    <property type="interactions" value="19"/>
</dbReference>
<dbReference type="ComplexPortal" id="CPX-2458">
    <property type="entry name" value="ESCRT-II complex"/>
</dbReference>
<dbReference type="FunCoup" id="Q7JXV9">
    <property type="interactions" value="1254"/>
</dbReference>
<dbReference type="IntAct" id="Q7JXV9">
    <property type="interactions" value="8"/>
</dbReference>
<dbReference type="STRING" id="7227.FBpp0087774"/>
<dbReference type="MoonProt" id="Q7JXV9"/>
<dbReference type="PaxDb" id="7227-FBpp0087774"/>
<dbReference type="DNASU" id="35847"/>
<dbReference type="EnsemblMetazoa" id="FBtr0088694">
    <property type="protein sequence ID" value="FBpp0087774"/>
    <property type="gene ID" value="FBgn0022027"/>
</dbReference>
<dbReference type="GeneID" id="35847"/>
<dbReference type="KEGG" id="dme:Dmel_CG14750"/>
<dbReference type="UCSC" id="CG14750-RA">
    <property type="organism name" value="d. melanogaster"/>
</dbReference>
<dbReference type="AGR" id="FB:FBgn0022027"/>
<dbReference type="CTD" id="84313"/>
<dbReference type="FlyBase" id="FBgn0022027">
    <property type="gene designation" value="Vps25"/>
</dbReference>
<dbReference type="VEuPathDB" id="VectorBase:FBgn0022027"/>
<dbReference type="eggNOG" id="KOG4068">
    <property type="taxonomic scope" value="Eukaryota"/>
</dbReference>
<dbReference type="GeneTree" id="ENSGT00390000014892"/>
<dbReference type="HOGENOM" id="CLU_087657_0_1_1"/>
<dbReference type="InParanoid" id="Q7JXV9"/>
<dbReference type="OMA" id="TRCLIMW"/>
<dbReference type="OrthoDB" id="245150at2759"/>
<dbReference type="PhylomeDB" id="Q7JXV9"/>
<dbReference type="Reactome" id="R-DME-917729">
    <property type="pathway name" value="Endosomal Sorting Complex Required For Transport (ESCRT)"/>
</dbReference>
<dbReference type="BioGRID-ORCS" id="35847">
    <property type="hits" value="0 hits in 1 CRISPR screen"/>
</dbReference>
<dbReference type="GenomeRNAi" id="35847"/>
<dbReference type="PRO" id="PR:Q7JXV9"/>
<dbReference type="Proteomes" id="UP000000803">
    <property type="component" value="Chromosome 2R"/>
</dbReference>
<dbReference type="Bgee" id="FBgn0022027">
    <property type="expression patterns" value="Expressed in spermatocyte in testis and 166 other cell types or tissues"/>
</dbReference>
<dbReference type="GO" id="GO:0000814">
    <property type="term" value="C:ESCRT II complex"/>
    <property type="evidence" value="ECO:0000250"/>
    <property type="project" value="FlyBase"/>
</dbReference>
<dbReference type="GO" id="GO:0042803">
    <property type="term" value="F:protein homodimerization activity"/>
    <property type="evidence" value="ECO:0000318"/>
    <property type="project" value="GO_Central"/>
</dbReference>
<dbReference type="GO" id="GO:0005198">
    <property type="term" value="F:structural molecule activity"/>
    <property type="evidence" value="ECO:0000250"/>
    <property type="project" value="FlyBase"/>
</dbReference>
<dbReference type="GO" id="GO:0097352">
    <property type="term" value="P:autophagosome maturation"/>
    <property type="evidence" value="ECO:0000315"/>
    <property type="project" value="FlyBase"/>
</dbReference>
<dbReference type="GO" id="GO:0045450">
    <property type="term" value="P:bicoid mRNA localization"/>
    <property type="evidence" value="ECO:0000315"/>
    <property type="project" value="UniProtKB"/>
</dbReference>
<dbReference type="GO" id="GO:0016197">
    <property type="term" value="P:endosomal transport"/>
    <property type="evidence" value="ECO:0000315"/>
    <property type="project" value="FlyBase"/>
</dbReference>
<dbReference type="GO" id="GO:0032509">
    <property type="term" value="P:endosome transport via multivesicular body sorting pathway"/>
    <property type="evidence" value="ECO:0000315"/>
    <property type="project" value="FlyBase"/>
</dbReference>
<dbReference type="GO" id="GO:0010669">
    <property type="term" value="P:epithelial structure maintenance"/>
    <property type="evidence" value="ECO:0000315"/>
    <property type="project" value="FlyBase"/>
</dbReference>
<dbReference type="GO" id="GO:0048803">
    <property type="term" value="P:imaginal disc-derived male genitalia morphogenesis"/>
    <property type="evidence" value="ECO:0000315"/>
    <property type="project" value="FlyBase"/>
</dbReference>
<dbReference type="GO" id="GO:0045199">
    <property type="term" value="P:maintenance of epithelial cell apical/basal polarity"/>
    <property type="evidence" value="ECO:0000315"/>
    <property type="project" value="FlyBase"/>
</dbReference>
<dbReference type="GO" id="GO:0050680">
    <property type="term" value="P:negative regulation of epithelial cell proliferation"/>
    <property type="evidence" value="ECO:0000315"/>
    <property type="project" value="FlyBase"/>
</dbReference>
<dbReference type="GO" id="GO:0008104">
    <property type="term" value="P:protein localization"/>
    <property type="evidence" value="ECO:0000315"/>
    <property type="project" value="UniProtKB"/>
</dbReference>
<dbReference type="GO" id="GO:0043328">
    <property type="term" value="P:protein transport to vacuole involved in ubiquitin-dependent protein catabolic process via the multivesicular body sorting pathway"/>
    <property type="evidence" value="ECO:0000318"/>
    <property type="project" value="GO_Central"/>
</dbReference>
<dbReference type="GO" id="GO:0042981">
    <property type="term" value="P:regulation of apoptotic process"/>
    <property type="evidence" value="ECO:0000315"/>
    <property type="project" value="FlyBase"/>
</dbReference>
<dbReference type="GO" id="GO:0070086">
    <property type="term" value="P:ubiquitin-dependent endocytosis"/>
    <property type="evidence" value="ECO:0000315"/>
    <property type="project" value="FlyBase"/>
</dbReference>
<dbReference type="GO" id="GO:0043162">
    <property type="term" value="P:ubiquitin-dependent protein catabolic process via the multivesicular body sorting pathway"/>
    <property type="evidence" value="ECO:0000315"/>
    <property type="project" value="FlyBase"/>
</dbReference>
<dbReference type="FunFam" id="1.10.10.570:FF:000003">
    <property type="entry name" value="Vacuolar protein-sorting-associated protein 25"/>
    <property type="match status" value="1"/>
</dbReference>
<dbReference type="FunFam" id="1.10.10.10:FF:000141">
    <property type="entry name" value="vacuolar protein-sorting-associated protein 25"/>
    <property type="match status" value="1"/>
</dbReference>
<dbReference type="Gene3D" id="1.10.10.570">
    <property type="entry name" value="Winged helix' DNA-binding domain. Chain C. Domain 1"/>
    <property type="match status" value="1"/>
</dbReference>
<dbReference type="Gene3D" id="1.10.10.10">
    <property type="entry name" value="Winged helix-like DNA-binding domain superfamily/Winged helix DNA-binding domain"/>
    <property type="match status" value="1"/>
</dbReference>
<dbReference type="InterPro" id="IPR008570">
    <property type="entry name" value="ESCRT-II_cplx_Vps25-sub"/>
</dbReference>
<dbReference type="InterPro" id="IPR014041">
    <property type="entry name" value="ESCRT-II_cplx_Vps25-sub_N"/>
</dbReference>
<dbReference type="InterPro" id="IPR036388">
    <property type="entry name" value="WH-like_DNA-bd_sf"/>
</dbReference>
<dbReference type="InterPro" id="IPR036390">
    <property type="entry name" value="WH_DNA-bd_sf"/>
</dbReference>
<dbReference type="PANTHER" id="PTHR13149">
    <property type="entry name" value="VACUOLAR PROTEIN SORTING-ASSOCIATED PROTEIN VPS25"/>
    <property type="match status" value="1"/>
</dbReference>
<dbReference type="PANTHER" id="PTHR13149:SF0">
    <property type="entry name" value="VACUOLAR PROTEIN-SORTING-ASSOCIATED PROTEIN 25"/>
    <property type="match status" value="1"/>
</dbReference>
<dbReference type="Pfam" id="PF05871">
    <property type="entry name" value="ESCRT-II"/>
    <property type="match status" value="1"/>
</dbReference>
<dbReference type="SUPFAM" id="SSF46785">
    <property type="entry name" value="Winged helix' DNA-binding domain"/>
    <property type="match status" value="2"/>
</dbReference>
<proteinExistence type="evidence at protein level"/>
<sequence length="174" mass="20608">MAEFQWPWEYTFPPFFTLQPHEETRQQQLKVWTDLFLKYLRHTNRFTLSIGDQNSPLFHNEALKRRLSPELVLAILGELERSGHANPLDKRRQEWQVYWFTLEEYGNMVYDWVQETGQTNTICTLYEIASGENTSHLDFYGVDEAVLLSALRLLEEKGRCELIEMDGSHGVKFF</sequence>
<keyword id="KW-0963">Cytoplasm</keyword>
<keyword id="KW-0967">Endosome</keyword>
<keyword id="KW-0472">Membrane</keyword>
<keyword id="KW-0653">Protein transport</keyword>
<keyword id="KW-1185">Reference proteome</keyword>
<keyword id="KW-0813">Transport</keyword>
<gene>
    <name type="primary">Vps25</name>
    <name type="synonym">l(2)44Db</name>
    <name type="ORF">CG14750</name>
</gene>
<organism>
    <name type="scientific">Drosophila melanogaster</name>
    <name type="common">Fruit fly</name>
    <dbReference type="NCBI Taxonomy" id="7227"/>
    <lineage>
        <taxon>Eukaryota</taxon>
        <taxon>Metazoa</taxon>
        <taxon>Ecdysozoa</taxon>
        <taxon>Arthropoda</taxon>
        <taxon>Hexapoda</taxon>
        <taxon>Insecta</taxon>
        <taxon>Pterygota</taxon>
        <taxon>Neoptera</taxon>
        <taxon>Endopterygota</taxon>
        <taxon>Diptera</taxon>
        <taxon>Brachycera</taxon>
        <taxon>Muscomorpha</taxon>
        <taxon>Ephydroidea</taxon>
        <taxon>Drosophilidae</taxon>
        <taxon>Drosophila</taxon>
        <taxon>Sophophora</taxon>
    </lineage>
</organism>
<name>VPS25_DROME</name>
<protein>
    <recommendedName>
        <fullName>Vacuolar protein-sorting-associated protein 25</fullName>
    </recommendedName>
    <alternativeName>
        <fullName>ESCRT-II complex subunit VPS25</fullName>
    </alternativeName>
    <alternativeName>
        <fullName>Vacuolar protein sorting 25</fullName>
    </alternativeName>
</protein>